<reference key="1">
    <citation type="online journal article" date="1995" name="Plant Gene Register">
        <title>A new member of the histone H4 gene family in Zea mays.</title>
        <authorList>
            <person name="Tacchini P."/>
            <person name="Walbot W."/>
        </authorList>
        <locator>PGR95-023</locator>
    </citation>
    <scope>NUCLEOTIDE SEQUENCE [GENOMIC DNA]</scope>
    <source>
        <strain>cv. B37N</strain>
    </source>
</reference>
<reference key="2">
    <citation type="journal article" date="2006" name="Genetics">
        <title>Partitioning of the maize epigenome by the number of methyl groups on histone H3 lysines 9 and 27.</title>
        <authorList>
            <person name="Shi J."/>
            <person name="Dawe R.K."/>
        </authorList>
    </citation>
    <scope>SUBCELLULAR LOCATION</scope>
    <scope>METHYLATION AT LYS-21</scope>
</reference>
<gene>
    <name type="primary">H4</name>
</gene>
<protein>
    <recommendedName>
        <fullName>Histone H4.3</fullName>
    </recommendedName>
    <alternativeName>
        <fullName>HM4</fullName>
    </alternativeName>
</protein>
<dbReference type="EMBL" id="X84376">
    <property type="protein sequence ID" value="CAA59110.1"/>
    <property type="molecule type" value="Genomic_DNA"/>
</dbReference>
<dbReference type="SMR" id="Q41811"/>
<dbReference type="STRING" id="4577.Q41811"/>
<dbReference type="iPTMnet" id="Q41811"/>
<dbReference type="InParanoid" id="Q41811"/>
<dbReference type="Proteomes" id="UP000007305">
    <property type="component" value="Unplaced"/>
</dbReference>
<dbReference type="ExpressionAtlas" id="Q41811">
    <property type="expression patterns" value="baseline and differential"/>
</dbReference>
<dbReference type="GO" id="GO:0000786">
    <property type="term" value="C:nucleosome"/>
    <property type="evidence" value="ECO:0007669"/>
    <property type="project" value="UniProtKB-KW"/>
</dbReference>
<dbReference type="GO" id="GO:0005634">
    <property type="term" value="C:nucleus"/>
    <property type="evidence" value="ECO:0007669"/>
    <property type="project" value="UniProtKB-SubCell"/>
</dbReference>
<dbReference type="GO" id="GO:0003677">
    <property type="term" value="F:DNA binding"/>
    <property type="evidence" value="ECO:0000318"/>
    <property type="project" value="GO_Central"/>
</dbReference>
<dbReference type="GO" id="GO:0046982">
    <property type="term" value="F:protein heterodimerization activity"/>
    <property type="evidence" value="ECO:0007669"/>
    <property type="project" value="InterPro"/>
</dbReference>
<dbReference type="GO" id="GO:0030527">
    <property type="term" value="F:structural constituent of chromatin"/>
    <property type="evidence" value="ECO:0007669"/>
    <property type="project" value="InterPro"/>
</dbReference>
<dbReference type="GO" id="GO:0006334">
    <property type="term" value="P:nucleosome assembly"/>
    <property type="evidence" value="ECO:0000318"/>
    <property type="project" value="GO_Central"/>
</dbReference>
<dbReference type="CDD" id="cd22912">
    <property type="entry name" value="HFD_H4"/>
    <property type="match status" value="1"/>
</dbReference>
<dbReference type="FunFam" id="1.10.20.10:FF:000002">
    <property type="entry name" value="Histone H4"/>
    <property type="match status" value="1"/>
</dbReference>
<dbReference type="Gene3D" id="1.10.20.10">
    <property type="entry name" value="Histone, subunit A"/>
    <property type="match status" value="1"/>
</dbReference>
<dbReference type="InterPro" id="IPR035425">
    <property type="entry name" value="CENP-T/H4_C"/>
</dbReference>
<dbReference type="InterPro" id="IPR009072">
    <property type="entry name" value="Histone-fold"/>
</dbReference>
<dbReference type="InterPro" id="IPR001951">
    <property type="entry name" value="Histone_H4"/>
</dbReference>
<dbReference type="PANTHER" id="PTHR10484">
    <property type="entry name" value="HISTONE H4"/>
    <property type="match status" value="1"/>
</dbReference>
<dbReference type="Pfam" id="PF15511">
    <property type="entry name" value="CENP-T_C"/>
    <property type="match status" value="1"/>
</dbReference>
<dbReference type="PRINTS" id="PR00623">
    <property type="entry name" value="HISTONEH4"/>
</dbReference>
<dbReference type="SMART" id="SM00417">
    <property type="entry name" value="H4"/>
    <property type="match status" value="1"/>
</dbReference>
<dbReference type="SUPFAM" id="SSF47113">
    <property type="entry name" value="Histone-fold"/>
    <property type="match status" value="1"/>
</dbReference>
<proteinExistence type="evidence at protein level"/>
<comment type="function">
    <text>Core component of nucleosome. Nucleosomes wrap and compact DNA into chromatin, limiting DNA accessibility to the cellular machineries which require DNA as a template. Histones thereby play a central role in transcription regulation, DNA repair, DNA replication and chromosomal stability. DNA accessibility is regulated via a complex set of post-translational modifications of histones, also called histone code, and nucleosome remodeling.</text>
</comment>
<comment type="subunit">
    <text>The nucleosome is a histone octamer containing two molecules each of H2A, H2B, H3 and H4 assembled in one H3-H4 heterotetramer and two H2A-H2B heterodimers. The octamer wraps approximately 147 bp of DNA.</text>
</comment>
<comment type="subcellular location">
    <subcellularLocation>
        <location evidence="2">Nucleus</location>
    </subcellularLocation>
    <subcellularLocation>
        <location evidence="2">Chromosome</location>
    </subcellularLocation>
</comment>
<comment type="PTM">
    <text>Lys-21Me2 and Lys-21Me3 not detected.</text>
</comment>
<comment type="similarity">
    <text evidence="3">Belongs to the histone H4 family.</text>
</comment>
<keyword id="KW-0007">Acetylation</keyword>
<keyword id="KW-0158">Chromosome</keyword>
<keyword id="KW-0238">DNA-binding</keyword>
<keyword id="KW-0488">Methylation</keyword>
<keyword id="KW-0544">Nucleosome core</keyword>
<keyword id="KW-0539">Nucleus</keyword>
<keyword id="KW-1185">Reference proteome</keyword>
<sequence length="103" mass="11552">MSGRGKGGKGLGKGARKRHRKVLRDNIQGITKPAIRRLARRGGVKRISGLIYEETRGVRKIFLENVIRDAVTYTEHARRKTVTAMDVVYALKRQGRTLYGFGG</sequence>
<feature type="initiator methionine" description="Removed" evidence="1">
    <location>
        <position position="1"/>
    </location>
</feature>
<feature type="chain" id="PRO_0000158325" description="Histone H4.3">
    <location>
        <begin position="2"/>
        <end position="103"/>
    </location>
</feature>
<feature type="DNA-binding region">
    <location>
        <begin position="17"/>
        <end position="21"/>
    </location>
</feature>
<feature type="modified residue" description="N-acetylserine" evidence="1">
    <location>
        <position position="2"/>
    </location>
</feature>
<feature type="modified residue" description="N6-acetyllysine" evidence="1">
    <location>
        <position position="6"/>
    </location>
</feature>
<feature type="modified residue" description="N6-acetyllysine" evidence="1">
    <location>
        <position position="9"/>
    </location>
</feature>
<feature type="modified residue" description="N6-acetyllysine" evidence="1">
    <location>
        <position position="13"/>
    </location>
</feature>
<feature type="modified residue" description="N6-acetyllysine" evidence="1">
    <location>
        <position position="17"/>
    </location>
</feature>
<feature type="modified residue" description="N6-acetyllysine; alternate" evidence="1">
    <location>
        <position position="21"/>
    </location>
</feature>
<feature type="modified residue" description="N6-methyllysine; alternate" evidence="2">
    <location>
        <position position="21"/>
    </location>
</feature>
<accession>Q41811</accession>
<organism>
    <name type="scientific">Zea mays</name>
    <name type="common">Maize</name>
    <dbReference type="NCBI Taxonomy" id="4577"/>
    <lineage>
        <taxon>Eukaryota</taxon>
        <taxon>Viridiplantae</taxon>
        <taxon>Streptophyta</taxon>
        <taxon>Embryophyta</taxon>
        <taxon>Tracheophyta</taxon>
        <taxon>Spermatophyta</taxon>
        <taxon>Magnoliopsida</taxon>
        <taxon>Liliopsida</taxon>
        <taxon>Poales</taxon>
        <taxon>Poaceae</taxon>
        <taxon>PACMAD clade</taxon>
        <taxon>Panicoideae</taxon>
        <taxon>Andropogonodae</taxon>
        <taxon>Andropogoneae</taxon>
        <taxon>Tripsacinae</taxon>
        <taxon>Zea</taxon>
    </lineage>
</organism>
<name>H43_MAIZE</name>
<evidence type="ECO:0000250" key="1"/>
<evidence type="ECO:0000269" key="2">
    <source>
    </source>
</evidence>
<evidence type="ECO:0000305" key="3"/>